<dbReference type="EC" id="4.1.99.17" evidence="1"/>
<dbReference type="EMBL" id="AM039952">
    <property type="protein sequence ID" value="CAJ25306.1"/>
    <property type="molecule type" value="Genomic_DNA"/>
</dbReference>
<dbReference type="RefSeq" id="WP_011348514.1">
    <property type="nucleotide sequence ID" value="NZ_CP017190.1"/>
</dbReference>
<dbReference type="SMR" id="Q3BPK7"/>
<dbReference type="STRING" id="456327.BJD11_04845"/>
<dbReference type="GeneID" id="97511642"/>
<dbReference type="KEGG" id="xcv:XCV3575"/>
<dbReference type="eggNOG" id="COG0422">
    <property type="taxonomic scope" value="Bacteria"/>
</dbReference>
<dbReference type="HOGENOM" id="CLU_013181_2_1_6"/>
<dbReference type="UniPathway" id="UPA00060"/>
<dbReference type="Proteomes" id="UP000007069">
    <property type="component" value="Chromosome"/>
</dbReference>
<dbReference type="GO" id="GO:0005829">
    <property type="term" value="C:cytosol"/>
    <property type="evidence" value="ECO:0007669"/>
    <property type="project" value="TreeGrafter"/>
</dbReference>
<dbReference type="GO" id="GO:0051539">
    <property type="term" value="F:4 iron, 4 sulfur cluster binding"/>
    <property type="evidence" value="ECO:0007669"/>
    <property type="project" value="UniProtKB-KW"/>
</dbReference>
<dbReference type="GO" id="GO:0016830">
    <property type="term" value="F:carbon-carbon lyase activity"/>
    <property type="evidence" value="ECO:0007669"/>
    <property type="project" value="InterPro"/>
</dbReference>
<dbReference type="GO" id="GO:0008270">
    <property type="term" value="F:zinc ion binding"/>
    <property type="evidence" value="ECO:0007669"/>
    <property type="project" value="UniProtKB-UniRule"/>
</dbReference>
<dbReference type="GO" id="GO:0009228">
    <property type="term" value="P:thiamine biosynthetic process"/>
    <property type="evidence" value="ECO:0007669"/>
    <property type="project" value="UniProtKB-KW"/>
</dbReference>
<dbReference type="GO" id="GO:0009229">
    <property type="term" value="P:thiamine diphosphate biosynthetic process"/>
    <property type="evidence" value="ECO:0007669"/>
    <property type="project" value="UniProtKB-UniRule"/>
</dbReference>
<dbReference type="FunFam" id="3.20.20.540:FF:000001">
    <property type="entry name" value="Phosphomethylpyrimidine synthase"/>
    <property type="match status" value="1"/>
</dbReference>
<dbReference type="Gene3D" id="6.10.250.620">
    <property type="match status" value="1"/>
</dbReference>
<dbReference type="Gene3D" id="3.20.20.540">
    <property type="entry name" value="Radical SAM ThiC family, central domain"/>
    <property type="match status" value="1"/>
</dbReference>
<dbReference type="HAMAP" id="MF_00089">
    <property type="entry name" value="ThiC"/>
    <property type="match status" value="1"/>
</dbReference>
<dbReference type="InterPro" id="IPR037509">
    <property type="entry name" value="ThiC"/>
</dbReference>
<dbReference type="InterPro" id="IPR025747">
    <property type="entry name" value="ThiC-associated_dom"/>
</dbReference>
<dbReference type="InterPro" id="IPR038521">
    <property type="entry name" value="ThiC/Bza_core_dom"/>
</dbReference>
<dbReference type="InterPro" id="IPR002817">
    <property type="entry name" value="ThiC/BzaA/B"/>
</dbReference>
<dbReference type="NCBIfam" id="NF006763">
    <property type="entry name" value="PRK09284.1"/>
    <property type="match status" value="1"/>
</dbReference>
<dbReference type="NCBIfam" id="NF009895">
    <property type="entry name" value="PRK13352.1"/>
    <property type="match status" value="1"/>
</dbReference>
<dbReference type="NCBIfam" id="TIGR00190">
    <property type="entry name" value="thiC"/>
    <property type="match status" value="1"/>
</dbReference>
<dbReference type="PANTHER" id="PTHR30557:SF1">
    <property type="entry name" value="PHOSPHOMETHYLPYRIMIDINE SYNTHASE, CHLOROPLASTIC"/>
    <property type="match status" value="1"/>
</dbReference>
<dbReference type="PANTHER" id="PTHR30557">
    <property type="entry name" value="THIAMINE BIOSYNTHESIS PROTEIN THIC"/>
    <property type="match status" value="1"/>
</dbReference>
<dbReference type="Pfam" id="PF13667">
    <property type="entry name" value="ThiC-associated"/>
    <property type="match status" value="1"/>
</dbReference>
<dbReference type="Pfam" id="PF01964">
    <property type="entry name" value="ThiC_Rad_SAM"/>
    <property type="match status" value="1"/>
</dbReference>
<dbReference type="SFLD" id="SFLDF00407">
    <property type="entry name" value="phosphomethylpyrimidine_syntha"/>
    <property type="match status" value="1"/>
</dbReference>
<dbReference type="SFLD" id="SFLDG01114">
    <property type="entry name" value="phosphomethylpyrimidine_syntha"/>
    <property type="match status" value="1"/>
</dbReference>
<dbReference type="SFLD" id="SFLDS00113">
    <property type="entry name" value="Radical_SAM_Phosphomethylpyrim"/>
    <property type="match status" value="1"/>
</dbReference>
<keyword id="KW-0004">4Fe-4S</keyword>
<keyword id="KW-0408">Iron</keyword>
<keyword id="KW-0411">Iron-sulfur</keyword>
<keyword id="KW-0456">Lyase</keyword>
<keyword id="KW-0479">Metal-binding</keyword>
<keyword id="KW-0949">S-adenosyl-L-methionine</keyword>
<keyword id="KW-0784">Thiamine biosynthesis</keyword>
<keyword id="KW-0862">Zinc</keyword>
<reference key="1">
    <citation type="journal article" date="2005" name="J. Bacteriol.">
        <title>Insights into genome plasticity and pathogenicity of the plant pathogenic Bacterium Xanthomonas campestris pv. vesicatoria revealed by the complete genome sequence.</title>
        <authorList>
            <person name="Thieme F."/>
            <person name="Koebnik R."/>
            <person name="Bekel T."/>
            <person name="Berger C."/>
            <person name="Boch J."/>
            <person name="Buettner D."/>
            <person name="Caldana C."/>
            <person name="Gaigalat L."/>
            <person name="Goesmann A."/>
            <person name="Kay S."/>
            <person name="Kirchner O."/>
            <person name="Lanz C."/>
            <person name="Linke B."/>
            <person name="McHardy A.C."/>
            <person name="Meyer F."/>
            <person name="Mittenhuber G."/>
            <person name="Nies D.H."/>
            <person name="Niesbach-Kloesgen U."/>
            <person name="Patschkowski T."/>
            <person name="Rueckert C."/>
            <person name="Rupp O."/>
            <person name="Schneiker S."/>
            <person name="Schuster S.C."/>
            <person name="Vorhoelter F.J."/>
            <person name="Weber E."/>
            <person name="Puehler A."/>
            <person name="Bonas U."/>
            <person name="Bartels D."/>
            <person name="Kaiser O."/>
        </authorList>
    </citation>
    <scope>NUCLEOTIDE SEQUENCE [LARGE SCALE GENOMIC DNA]</scope>
    <source>
        <strain>85-10</strain>
    </source>
</reference>
<feature type="chain" id="PRO_0000242319" description="Phosphomethylpyrimidine synthase">
    <location>
        <begin position="1"/>
        <end position="625"/>
    </location>
</feature>
<feature type="binding site" evidence="1">
    <location>
        <position position="230"/>
    </location>
    <ligand>
        <name>substrate</name>
    </ligand>
</feature>
<feature type="binding site" evidence="1">
    <location>
        <position position="259"/>
    </location>
    <ligand>
        <name>substrate</name>
    </ligand>
</feature>
<feature type="binding site" evidence="1">
    <location>
        <position position="288"/>
    </location>
    <ligand>
        <name>substrate</name>
    </ligand>
</feature>
<feature type="binding site" evidence="1">
    <location>
        <position position="324"/>
    </location>
    <ligand>
        <name>substrate</name>
    </ligand>
</feature>
<feature type="binding site" evidence="1">
    <location>
        <begin position="344"/>
        <end position="346"/>
    </location>
    <ligand>
        <name>substrate</name>
    </ligand>
</feature>
<feature type="binding site" evidence="1">
    <location>
        <begin position="385"/>
        <end position="388"/>
    </location>
    <ligand>
        <name>substrate</name>
    </ligand>
</feature>
<feature type="binding site" evidence="1">
    <location>
        <position position="424"/>
    </location>
    <ligand>
        <name>substrate</name>
    </ligand>
</feature>
<feature type="binding site" evidence="1">
    <location>
        <position position="428"/>
    </location>
    <ligand>
        <name>Zn(2+)</name>
        <dbReference type="ChEBI" id="CHEBI:29105"/>
    </ligand>
</feature>
<feature type="binding site" evidence="1">
    <location>
        <position position="451"/>
    </location>
    <ligand>
        <name>substrate</name>
    </ligand>
</feature>
<feature type="binding site" evidence="1">
    <location>
        <position position="492"/>
    </location>
    <ligand>
        <name>Zn(2+)</name>
        <dbReference type="ChEBI" id="CHEBI:29105"/>
    </ligand>
</feature>
<feature type="binding site" evidence="1">
    <location>
        <position position="572"/>
    </location>
    <ligand>
        <name>[4Fe-4S] cluster</name>
        <dbReference type="ChEBI" id="CHEBI:49883"/>
        <note>4Fe-4S-S-AdoMet</note>
    </ligand>
</feature>
<feature type="binding site" evidence="1">
    <location>
        <position position="575"/>
    </location>
    <ligand>
        <name>[4Fe-4S] cluster</name>
        <dbReference type="ChEBI" id="CHEBI:49883"/>
        <note>4Fe-4S-S-AdoMet</note>
    </ligand>
</feature>
<feature type="binding site" evidence="1">
    <location>
        <position position="580"/>
    </location>
    <ligand>
        <name>[4Fe-4S] cluster</name>
        <dbReference type="ChEBI" id="CHEBI:49883"/>
        <note>4Fe-4S-S-AdoMet</note>
    </ligand>
</feature>
<gene>
    <name evidence="1" type="primary">thiC</name>
    <name type="ordered locus">XCV3575</name>
</gene>
<sequence length="625" mass="69187">MNAAPTVLQQQAQSLSEAVTQPIPGSRKIFVQGSRADLQVPMREIALTRTPTLFGGEENPPLSVYDTSGPYTDPRVAIDLAAGLAPLRAQWIAERGDTVALDGLSSSFGRGREHDVRLDAVRFPARRLPRVARQGANVTQMHYARRGIITPEMEYVAIRENQRLEAVTDASLRRQHPGQAFGASIQQRITPEFVREEIARGRAILPNNINHPESEPMIIGRNFLTKINANIGNSAVSSGIAEEVEKLVWSIRWGGDTVMDLSTGKHIHETREWIIRNSPVPIGTVPIYQALEKVDGRAEALTWEIFRDTLIEQAEQGVDYFTIHAGVLLRYVPLTAQRVTGIVSRGGSIMAKWCLAHHKENFLYTHFEDICQIMKAYDVAFSLGDGLRPGCIADANDAAQFGELETLGELTKLAWKHDVQTMIEGPGHVPMQLIKENMDKQLRECGEAPFYTLGPLTTDIAPGYDHITSAIGAAMIGWFGTAMLCYVTPKEHLGLPNRQDVRDGIMAYKIAAHAADLAKGHPGAQVRDNALSKARFEFRWDDQFHLGLDPEKAKEFHDQTLPKDAHKLAHFCSMCGPHFCSMKITQDVRDYAAEHGMSEAQALSTGMQEKSAQFVAQGAQVYRAT</sequence>
<proteinExistence type="inferred from homology"/>
<organism>
    <name type="scientific">Xanthomonas euvesicatoria pv. vesicatoria (strain 85-10)</name>
    <name type="common">Xanthomonas campestris pv. vesicatoria</name>
    <dbReference type="NCBI Taxonomy" id="316273"/>
    <lineage>
        <taxon>Bacteria</taxon>
        <taxon>Pseudomonadati</taxon>
        <taxon>Pseudomonadota</taxon>
        <taxon>Gammaproteobacteria</taxon>
        <taxon>Lysobacterales</taxon>
        <taxon>Lysobacteraceae</taxon>
        <taxon>Xanthomonas</taxon>
    </lineage>
</organism>
<comment type="function">
    <text evidence="1">Catalyzes the synthesis of the hydroxymethylpyrimidine phosphate (HMP-P) moiety of thiamine from aminoimidazole ribotide (AIR) in a radical S-adenosyl-L-methionine (SAM)-dependent reaction.</text>
</comment>
<comment type="catalytic activity">
    <reaction evidence="1">
        <text>5-amino-1-(5-phospho-beta-D-ribosyl)imidazole + S-adenosyl-L-methionine = 4-amino-2-methyl-5-(phosphooxymethyl)pyrimidine + CO + 5'-deoxyadenosine + formate + L-methionine + 3 H(+)</text>
        <dbReference type="Rhea" id="RHEA:24840"/>
        <dbReference type="ChEBI" id="CHEBI:15378"/>
        <dbReference type="ChEBI" id="CHEBI:15740"/>
        <dbReference type="ChEBI" id="CHEBI:17245"/>
        <dbReference type="ChEBI" id="CHEBI:17319"/>
        <dbReference type="ChEBI" id="CHEBI:57844"/>
        <dbReference type="ChEBI" id="CHEBI:58354"/>
        <dbReference type="ChEBI" id="CHEBI:59789"/>
        <dbReference type="ChEBI" id="CHEBI:137981"/>
        <dbReference type="EC" id="4.1.99.17"/>
    </reaction>
</comment>
<comment type="cofactor">
    <cofactor evidence="1">
        <name>[4Fe-4S] cluster</name>
        <dbReference type="ChEBI" id="CHEBI:49883"/>
    </cofactor>
    <text evidence="1">Binds 1 [4Fe-4S] cluster per subunit. The cluster is coordinated with 3 cysteines and an exchangeable S-adenosyl-L-methionine.</text>
</comment>
<comment type="pathway">
    <text evidence="1">Cofactor biosynthesis; thiamine diphosphate biosynthesis.</text>
</comment>
<comment type="subunit">
    <text evidence="1">Homodimer.</text>
</comment>
<comment type="similarity">
    <text evidence="1">Belongs to the ThiC family.</text>
</comment>
<accession>Q3BPK7</accession>
<evidence type="ECO:0000255" key="1">
    <source>
        <dbReference type="HAMAP-Rule" id="MF_00089"/>
    </source>
</evidence>
<protein>
    <recommendedName>
        <fullName evidence="1">Phosphomethylpyrimidine synthase</fullName>
        <ecNumber evidence="1">4.1.99.17</ecNumber>
    </recommendedName>
    <alternativeName>
        <fullName evidence="1">Hydroxymethylpyrimidine phosphate synthase</fullName>
        <shortName evidence="1">HMP-P synthase</shortName>
        <shortName evidence="1">HMP-phosphate synthase</shortName>
        <shortName evidence="1">HMPP synthase</shortName>
    </alternativeName>
    <alternativeName>
        <fullName evidence="1">Thiamine biosynthesis protein ThiC</fullName>
    </alternativeName>
</protein>
<name>THIC_XANE5</name>